<name>Y1259_THEVO</name>
<comment type="cofactor">
    <cofactor evidence="1">
        <name>Mg(2+)</name>
        <dbReference type="ChEBI" id="CHEBI:18420"/>
    </cofactor>
    <text evidence="1">Binds two Mg(2+) per subunit.</text>
</comment>
<comment type="similarity">
    <text evidence="1">Belongs to the UPF0292 family.</text>
</comment>
<evidence type="ECO:0000255" key="1">
    <source>
        <dbReference type="HAMAP-Rule" id="MF_01095"/>
    </source>
</evidence>
<protein>
    <recommendedName>
        <fullName evidence="1">UPF0292 protein TV1259</fullName>
    </recommendedName>
</protein>
<sequence>MMRRYRRKNSSIPIIVEGRNDLASLRKLSFYGEIIVFNRGISITSFSDEISNKYREVIILTDFDNKGSFLKDRFYGYLTGMGVYVDLYLWNFIRKHVPIRTVEELPAEFEREVEKEIQM</sequence>
<proteinExistence type="inferred from homology"/>
<organism>
    <name type="scientific">Thermoplasma volcanium (strain ATCC 51530 / DSM 4299 / JCM 9571 / NBRC 15438 / GSS1)</name>
    <dbReference type="NCBI Taxonomy" id="273116"/>
    <lineage>
        <taxon>Archaea</taxon>
        <taxon>Methanobacteriati</taxon>
        <taxon>Thermoplasmatota</taxon>
        <taxon>Thermoplasmata</taxon>
        <taxon>Thermoplasmatales</taxon>
        <taxon>Thermoplasmataceae</taxon>
        <taxon>Thermoplasma</taxon>
    </lineage>
</organism>
<keyword id="KW-0460">Magnesium</keyword>
<keyword id="KW-0479">Metal-binding</keyword>
<dbReference type="EMBL" id="BA000011">
    <property type="protein sequence ID" value="BAB60401.1"/>
    <property type="molecule type" value="Genomic_DNA"/>
</dbReference>
<dbReference type="SMR" id="Q979A3"/>
<dbReference type="STRING" id="273116.gene:9382064"/>
<dbReference type="PaxDb" id="273116-14325497"/>
<dbReference type="KEGG" id="tvo:TVG1298026"/>
<dbReference type="eggNOG" id="arCOG01486">
    <property type="taxonomic scope" value="Archaea"/>
</dbReference>
<dbReference type="HOGENOM" id="CLU_140789_1_0_2"/>
<dbReference type="OrthoDB" id="56459at2157"/>
<dbReference type="PhylomeDB" id="Q979A3"/>
<dbReference type="Proteomes" id="UP000001017">
    <property type="component" value="Chromosome"/>
</dbReference>
<dbReference type="GO" id="GO:0046872">
    <property type="term" value="F:metal ion binding"/>
    <property type="evidence" value="ECO:0007669"/>
    <property type="project" value="UniProtKB-KW"/>
</dbReference>
<dbReference type="CDD" id="cd01027">
    <property type="entry name" value="TOPRIM_RNase_M5_like"/>
    <property type="match status" value="1"/>
</dbReference>
<dbReference type="Gene3D" id="3.40.1360.10">
    <property type="match status" value="1"/>
</dbReference>
<dbReference type="HAMAP" id="MF_01095">
    <property type="entry name" value="UPF0292"/>
    <property type="match status" value="1"/>
</dbReference>
<dbReference type="InterPro" id="IPR006171">
    <property type="entry name" value="TOPRIM_dom"/>
</dbReference>
<dbReference type="InterPro" id="IPR034141">
    <property type="entry name" value="TOPRIM_RNase_M5-like"/>
</dbReference>
<dbReference type="InterPro" id="IPR022972">
    <property type="entry name" value="UPF0292"/>
</dbReference>
<dbReference type="PANTHER" id="PTHR39964:SF2">
    <property type="entry name" value="UPF0292 PROTEIN MJ1624"/>
    <property type="match status" value="1"/>
</dbReference>
<dbReference type="PANTHER" id="PTHR39964">
    <property type="entry name" value="UPF0292 PROTEIN TK1411"/>
    <property type="match status" value="1"/>
</dbReference>
<dbReference type="Pfam" id="PF01751">
    <property type="entry name" value="Toprim"/>
    <property type="match status" value="1"/>
</dbReference>
<dbReference type="SUPFAM" id="SSF110455">
    <property type="entry name" value="Toprim domain"/>
    <property type="match status" value="1"/>
</dbReference>
<dbReference type="PROSITE" id="PS50880">
    <property type="entry name" value="TOPRIM"/>
    <property type="match status" value="1"/>
</dbReference>
<reference key="1">
    <citation type="journal article" date="2000" name="Proc. Natl. Acad. Sci. U.S.A.">
        <title>Archaeal adaptation to higher temperatures revealed by genomic sequence of Thermoplasma volcanium.</title>
        <authorList>
            <person name="Kawashima T."/>
            <person name="Amano N."/>
            <person name="Koike H."/>
            <person name="Makino S."/>
            <person name="Higuchi S."/>
            <person name="Kawashima-Ohya Y."/>
            <person name="Watanabe K."/>
            <person name="Yamazaki M."/>
            <person name="Kanehori K."/>
            <person name="Kawamoto T."/>
            <person name="Nunoshiba T."/>
            <person name="Yamamoto Y."/>
            <person name="Aramaki H."/>
            <person name="Makino K."/>
            <person name="Suzuki M."/>
        </authorList>
    </citation>
    <scope>NUCLEOTIDE SEQUENCE [LARGE SCALE GENOMIC DNA]</scope>
    <source>
        <strain>ATCC 51530 / DSM 4299 / JCM 9571 / NBRC 15438 / GSS1</strain>
    </source>
</reference>
<accession>Q979A3</accession>
<feature type="chain" id="PRO_0000143958" description="UPF0292 protein TV1259">
    <location>
        <begin position="1"/>
        <end position="119"/>
    </location>
</feature>
<feature type="domain" description="Toprim" evidence="1">
    <location>
        <begin position="11"/>
        <end position="93"/>
    </location>
</feature>
<feature type="binding site" evidence="1">
    <location>
        <position position="17"/>
    </location>
    <ligand>
        <name>Mg(2+)</name>
        <dbReference type="ChEBI" id="CHEBI:18420"/>
        <label>1</label>
        <note>catalytic</note>
    </ligand>
</feature>
<feature type="binding site" evidence="1">
    <location>
        <position position="62"/>
    </location>
    <ligand>
        <name>Mg(2+)</name>
        <dbReference type="ChEBI" id="CHEBI:18420"/>
        <label>1</label>
        <note>catalytic</note>
    </ligand>
</feature>
<feature type="binding site" evidence="1">
    <location>
        <position position="62"/>
    </location>
    <ligand>
        <name>Mg(2+)</name>
        <dbReference type="ChEBI" id="CHEBI:18420"/>
        <label>2</label>
    </ligand>
</feature>
<feature type="binding site" evidence="1">
    <location>
        <position position="64"/>
    </location>
    <ligand>
        <name>Mg(2+)</name>
        <dbReference type="ChEBI" id="CHEBI:18420"/>
        <label>2</label>
    </ligand>
</feature>
<gene>
    <name type="ordered locus">TV1259</name>
    <name type="ORF">TVG1298026</name>
</gene>